<keyword id="KW-0413">Isomerase</keyword>
<keyword id="KW-0574">Periplasm</keyword>
<keyword id="KW-1185">Reference proteome</keyword>
<keyword id="KW-0697">Rotamase</keyword>
<keyword id="KW-0732">Signal</keyword>
<organism>
    <name type="scientific">Brucella abortus (strain 2308)</name>
    <dbReference type="NCBI Taxonomy" id="359391"/>
    <lineage>
        <taxon>Bacteria</taxon>
        <taxon>Pseudomonadati</taxon>
        <taxon>Pseudomonadota</taxon>
        <taxon>Alphaproteobacteria</taxon>
        <taxon>Hyphomicrobiales</taxon>
        <taxon>Brucellaceae</taxon>
        <taxon>Brucella/Ochrobactrum group</taxon>
        <taxon>Brucella</taxon>
    </lineage>
</organism>
<comment type="function">
    <text evidence="1">PPIases accelerate the folding of proteins. It catalyzes the cis-trans isomerization of proline imidic peptide bonds in oligopeptides (By similarity).</text>
</comment>
<comment type="catalytic activity">
    <reaction>
        <text>[protein]-peptidylproline (omega=180) = [protein]-peptidylproline (omega=0)</text>
        <dbReference type="Rhea" id="RHEA:16237"/>
        <dbReference type="Rhea" id="RHEA-COMP:10747"/>
        <dbReference type="Rhea" id="RHEA-COMP:10748"/>
        <dbReference type="ChEBI" id="CHEBI:83833"/>
        <dbReference type="ChEBI" id="CHEBI:83834"/>
        <dbReference type="EC" id="5.2.1.8"/>
    </reaction>
</comment>
<comment type="subcellular location">
    <subcellularLocation>
        <location evidence="4">Periplasm</location>
    </subcellularLocation>
</comment>
<comment type="similarity">
    <text evidence="4">Belongs to the cyclophilin-type PPIase family.</text>
</comment>
<feature type="signal peptide" evidence="2">
    <location>
        <begin position="1"/>
        <end position="26"/>
    </location>
</feature>
<feature type="chain" id="PRO_0000282594" description="Probable peptidyl-prolyl cis-trans isomerase">
    <location>
        <begin position="27"/>
        <end position="196"/>
    </location>
</feature>
<feature type="domain" description="PPIase cyclophilin-type" evidence="3">
    <location>
        <begin position="29"/>
        <end position="194"/>
    </location>
</feature>
<name>PPI1_BRUA2</name>
<protein>
    <recommendedName>
        <fullName>Probable peptidyl-prolyl cis-trans isomerase</fullName>
        <shortName>PPIase</shortName>
        <ecNumber>5.2.1.8</ecNumber>
    </recommendedName>
    <alternativeName>
        <fullName>Rotamase</fullName>
    </alternativeName>
</protein>
<sequence>MSFIRSALAAAAFVALSIGAVQTASAADPENTVILKLKDGDVALEIRPDLAPKHVAQIKKLVREGAYNGVAFHRVIPGFMAQTGDVKFGNMDKGFDAARVGTGGSNYPDLPAEFSKEPFVRGTVGMARSQNPNSANSQFFIMFDDGPFLNGQYTVVGKVVSGMDAVDKIKKGSEAENGAVKNPDKIIKATIEADTK</sequence>
<evidence type="ECO:0000250" key="1"/>
<evidence type="ECO:0000255" key="2"/>
<evidence type="ECO:0000255" key="3">
    <source>
        <dbReference type="PROSITE-ProRule" id="PRU00156"/>
    </source>
</evidence>
<evidence type="ECO:0000305" key="4"/>
<gene>
    <name type="primary">ppi</name>
    <name type="ordered locus">BAB1_1118</name>
</gene>
<reference key="1">
    <citation type="journal article" date="2005" name="Infect. Immun.">
        <title>Whole-genome analyses of speciation events in pathogenic Brucellae.</title>
        <authorList>
            <person name="Chain P.S."/>
            <person name="Comerci D.J."/>
            <person name="Tolmasky M.E."/>
            <person name="Larimer F.W."/>
            <person name="Malfatti S.A."/>
            <person name="Vergez L.M."/>
            <person name="Aguero F."/>
            <person name="Land M.L."/>
            <person name="Ugalde R.A."/>
            <person name="Garcia E."/>
        </authorList>
    </citation>
    <scope>NUCLEOTIDE SEQUENCE [LARGE SCALE GENOMIC DNA]</scope>
    <source>
        <strain>2308</strain>
    </source>
</reference>
<dbReference type="EC" id="5.2.1.8"/>
<dbReference type="EMBL" id="AM040264">
    <property type="protein sequence ID" value="CAJ11074.1"/>
    <property type="molecule type" value="Genomic_DNA"/>
</dbReference>
<dbReference type="RefSeq" id="WP_002964222.1">
    <property type="nucleotide sequence ID" value="NZ_KN046823.1"/>
</dbReference>
<dbReference type="SMR" id="Q2YPY5"/>
<dbReference type="STRING" id="359391.BAB1_1118"/>
<dbReference type="KEGG" id="bmf:BAB1_1118"/>
<dbReference type="PATRIC" id="fig|359391.11.peg.19"/>
<dbReference type="HOGENOM" id="CLU_012062_16_6_5"/>
<dbReference type="PhylomeDB" id="Q2YPY5"/>
<dbReference type="Proteomes" id="UP000002719">
    <property type="component" value="Chromosome I"/>
</dbReference>
<dbReference type="GO" id="GO:0042597">
    <property type="term" value="C:periplasmic space"/>
    <property type="evidence" value="ECO:0007669"/>
    <property type="project" value="UniProtKB-SubCell"/>
</dbReference>
<dbReference type="GO" id="GO:0003755">
    <property type="term" value="F:peptidyl-prolyl cis-trans isomerase activity"/>
    <property type="evidence" value="ECO:0007669"/>
    <property type="project" value="UniProtKB-KW"/>
</dbReference>
<dbReference type="GO" id="GO:0006457">
    <property type="term" value="P:protein folding"/>
    <property type="evidence" value="ECO:0007669"/>
    <property type="project" value="InterPro"/>
</dbReference>
<dbReference type="CDD" id="cd00317">
    <property type="entry name" value="cyclophilin"/>
    <property type="match status" value="1"/>
</dbReference>
<dbReference type="Gene3D" id="2.40.100.10">
    <property type="entry name" value="Cyclophilin-like"/>
    <property type="match status" value="1"/>
</dbReference>
<dbReference type="InterPro" id="IPR029000">
    <property type="entry name" value="Cyclophilin-like_dom_sf"/>
</dbReference>
<dbReference type="InterPro" id="IPR024936">
    <property type="entry name" value="Cyclophilin-type_PPIase"/>
</dbReference>
<dbReference type="InterPro" id="IPR020892">
    <property type="entry name" value="Cyclophilin-type_PPIase_CS"/>
</dbReference>
<dbReference type="InterPro" id="IPR002130">
    <property type="entry name" value="Cyclophilin-type_PPIase_dom"/>
</dbReference>
<dbReference type="InterPro" id="IPR044666">
    <property type="entry name" value="Cyclophilin_A-like"/>
</dbReference>
<dbReference type="PANTHER" id="PTHR45625">
    <property type="entry name" value="PEPTIDYL-PROLYL CIS-TRANS ISOMERASE-RELATED"/>
    <property type="match status" value="1"/>
</dbReference>
<dbReference type="PANTHER" id="PTHR45625:SF4">
    <property type="entry name" value="PEPTIDYLPROLYL ISOMERASE DOMAIN AND WD REPEAT-CONTAINING PROTEIN 1"/>
    <property type="match status" value="1"/>
</dbReference>
<dbReference type="Pfam" id="PF00160">
    <property type="entry name" value="Pro_isomerase"/>
    <property type="match status" value="1"/>
</dbReference>
<dbReference type="PIRSF" id="PIRSF001467">
    <property type="entry name" value="Peptidylpro_ismrse"/>
    <property type="match status" value="1"/>
</dbReference>
<dbReference type="PRINTS" id="PR00153">
    <property type="entry name" value="CSAPPISMRASE"/>
</dbReference>
<dbReference type="SUPFAM" id="SSF50891">
    <property type="entry name" value="Cyclophilin-like"/>
    <property type="match status" value="1"/>
</dbReference>
<dbReference type="PROSITE" id="PS00170">
    <property type="entry name" value="CSA_PPIASE_1"/>
    <property type="match status" value="1"/>
</dbReference>
<dbReference type="PROSITE" id="PS50072">
    <property type="entry name" value="CSA_PPIASE_2"/>
    <property type="match status" value="1"/>
</dbReference>
<accession>Q2YPY5</accession>
<proteinExistence type="inferred from homology"/>